<proteinExistence type="inferred from homology"/>
<sequence length="181" mass="20917">MKQLLDFLPLVIFFAVYKFFDIYIASGALIAATALQLIVTYALYKKLEKMHLITFAMVTVFGTLTLVFHDDSFIKWKVTIIYSLFAIALGVSQLLNKSILKSMLGKEMQVEDKIWARVTWYWVVFFASCGLVNIYVAFSLPLETWVNFKVFGLTALTLINTVLTVFYLYKHLPEDQRKELK</sequence>
<accession>B8EEF1</accession>
<protein>
    <recommendedName>
        <fullName evidence="1">Inner membrane-spanning protein YciB</fullName>
    </recommendedName>
</protein>
<keyword id="KW-0997">Cell inner membrane</keyword>
<keyword id="KW-1003">Cell membrane</keyword>
<keyword id="KW-0472">Membrane</keyword>
<keyword id="KW-0812">Transmembrane</keyword>
<keyword id="KW-1133">Transmembrane helix</keyword>
<evidence type="ECO:0000255" key="1">
    <source>
        <dbReference type="HAMAP-Rule" id="MF_00189"/>
    </source>
</evidence>
<feature type="chain" id="PRO_1000124260" description="Inner membrane-spanning protein YciB">
    <location>
        <begin position="1"/>
        <end position="181"/>
    </location>
</feature>
<feature type="transmembrane region" description="Helical" evidence="1">
    <location>
        <begin position="10"/>
        <end position="30"/>
    </location>
</feature>
<feature type="transmembrane region" description="Helical" evidence="1">
    <location>
        <begin position="50"/>
        <end position="70"/>
    </location>
</feature>
<feature type="transmembrane region" description="Helical" evidence="1">
    <location>
        <begin position="80"/>
        <end position="100"/>
    </location>
</feature>
<feature type="transmembrane region" description="Helical" evidence="1">
    <location>
        <begin position="118"/>
        <end position="138"/>
    </location>
</feature>
<feature type="transmembrane region" description="Helical" evidence="1">
    <location>
        <begin position="148"/>
        <end position="168"/>
    </location>
</feature>
<gene>
    <name evidence="1" type="primary">yciB</name>
    <name type="ordered locus">Sbal223_1651</name>
</gene>
<reference key="1">
    <citation type="submission" date="2008-12" db="EMBL/GenBank/DDBJ databases">
        <title>Complete sequence of chromosome of Shewanella baltica OS223.</title>
        <authorList>
            <consortium name="US DOE Joint Genome Institute"/>
            <person name="Lucas S."/>
            <person name="Copeland A."/>
            <person name="Lapidus A."/>
            <person name="Glavina del Rio T."/>
            <person name="Dalin E."/>
            <person name="Tice H."/>
            <person name="Bruce D."/>
            <person name="Goodwin L."/>
            <person name="Pitluck S."/>
            <person name="Chertkov O."/>
            <person name="Meincke L."/>
            <person name="Brettin T."/>
            <person name="Detter J.C."/>
            <person name="Han C."/>
            <person name="Kuske C.R."/>
            <person name="Larimer F."/>
            <person name="Land M."/>
            <person name="Hauser L."/>
            <person name="Kyrpides N."/>
            <person name="Ovchinnikova G."/>
            <person name="Brettar I."/>
            <person name="Rodrigues J."/>
            <person name="Konstantinidis K."/>
            <person name="Tiedje J."/>
        </authorList>
    </citation>
    <scope>NUCLEOTIDE SEQUENCE [LARGE SCALE GENOMIC DNA]</scope>
    <source>
        <strain>OS223</strain>
    </source>
</reference>
<organism>
    <name type="scientific">Shewanella baltica (strain OS223)</name>
    <dbReference type="NCBI Taxonomy" id="407976"/>
    <lineage>
        <taxon>Bacteria</taxon>
        <taxon>Pseudomonadati</taxon>
        <taxon>Pseudomonadota</taxon>
        <taxon>Gammaproteobacteria</taxon>
        <taxon>Alteromonadales</taxon>
        <taxon>Shewanellaceae</taxon>
        <taxon>Shewanella</taxon>
    </lineage>
</organism>
<dbReference type="EMBL" id="CP001252">
    <property type="protein sequence ID" value="ACK46156.1"/>
    <property type="molecule type" value="Genomic_DNA"/>
</dbReference>
<dbReference type="RefSeq" id="WP_012587356.1">
    <property type="nucleotide sequence ID" value="NC_011663.1"/>
</dbReference>
<dbReference type="KEGG" id="sbp:Sbal223_1651"/>
<dbReference type="HOGENOM" id="CLU_089554_2_0_6"/>
<dbReference type="Proteomes" id="UP000002507">
    <property type="component" value="Chromosome"/>
</dbReference>
<dbReference type="GO" id="GO:0005886">
    <property type="term" value="C:plasma membrane"/>
    <property type="evidence" value="ECO:0007669"/>
    <property type="project" value="UniProtKB-SubCell"/>
</dbReference>
<dbReference type="HAMAP" id="MF_00189">
    <property type="entry name" value="YciB"/>
    <property type="match status" value="1"/>
</dbReference>
<dbReference type="InterPro" id="IPR006008">
    <property type="entry name" value="YciB"/>
</dbReference>
<dbReference type="NCBIfam" id="TIGR00997">
    <property type="entry name" value="ispZ"/>
    <property type="match status" value="1"/>
</dbReference>
<dbReference type="NCBIfam" id="NF001324">
    <property type="entry name" value="PRK00259.1-2"/>
    <property type="match status" value="1"/>
</dbReference>
<dbReference type="NCBIfam" id="NF001325">
    <property type="entry name" value="PRK00259.1-3"/>
    <property type="match status" value="1"/>
</dbReference>
<dbReference type="PANTHER" id="PTHR36917:SF1">
    <property type="entry name" value="INNER MEMBRANE-SPANNING PROTEIN YCIB"/>
    <property type="match status" value="1"/>
</dbReference>
<dbReference type="PANTHER" id="PTHR36917">
    <property type="entry name" value="INTRACELLULAR SEPTATION PROTEIN A-RELATED"/>
    <property type="match status" value="1"/>
</dbReference>
<dbReference type="Pfam" id="PF04279">
    <property type="entry name" value="IspA"/>
    <property type="match status" value="1"/>
</dbReference>
<comment type="function">
    <text evidence="1">Plays a role in cell envelope biogenesis, maintenance of cell envelope integrity and membrane homeostasis.</text>
</comment>
<comment type="subcellular location">
    <subcellularLocation>
        <location evidence="1">Cell inner membrane</location>
        <topology evidence="1">Multi-pass membrane protein</topology>
    </subcellularLocation>
</comment>
<comment type="similarity">
    <text evidence="1">Belongs to the YciB family.</text>
</comment>
<name>YCIB_SHEB2</name>